<sequence>MWDLNDAPHQTQREEESEEFCYSSPSKRVGSFSNSSSSAVVIEDGSDDDELNRVRPNNPLVTHQFFPEMDSNGGGVASGFPRAHWFGVKFCQSDLATGSSAGKATNVAAAVVEPAQPLKKSRRGPRSRSSQYRGVTFYRRTGRWESHIWDCGKQVYLGGFDTAHAAARAYDRAAIKFRGVEADINFNIDDYDDDLKQMTNLTKEEFVHVLRRQSTGFPRGSSKYRGVTLHKCGRWEARMGQFLGKKYVYLGLFDTEVEAARAYDKAAIKCNGKDAVTNFDPSIYDEELNAESSGNPTTPQDHNLDLSLGNSANSKHKSQDMRLRMNQQQQDSLHSNEVLGLGQTGMLNHTPNSNHQFPGSSNIGSGGGFSLFPAAENHRFDGRASTNQVLTNAAASSGFSPHHHNQIFNSTSTPHQNWLQTNGFQPPLMRPS</sequence>
<gene>
    <name evidence="10" type="primary">AP2</name>
    <name evidence="12" type="ordered locus">At4g36920</name>
    <name type="ORF">AP22.49</name>
    <name evidence="13" type="ORF">C7A10.440</name>
</gene>
<evidence type="ECO:0000255" key="1"/>
<evidence type="ECO:0000255" key="2">
    <source>
        <dbReference type="PROSITE-ProRule" id="PRU00366"/>
    </source>
</evidence>
<evidence type="ECO:0000256" key="3">
    <source>
        <dbReference type="SAM" id="MobiDB-lite"/>
    </source>
</evidence>
<evidence type="ECO:0000269" key="4">
    <source>
    </source>
</evidence>
<evidence type="ECO:0000269" key="5">
    <source>
    </source>
</evidence>
<evidence type="ECO:0000269" key="6">
    <source>
    </source>
</evidence>
<evidence type="ECO:0000269" key="7">
    <source>
    </source>
</evidence>
<evidence type="ECO:0000269" key="8">
    <source>
    </source>
</evidence>
<evidence type="ECO:0000269" key="9">
    <source>
    </source>
</evidence>
<evidence type="ECO:0000303" key="10">
    <source>
    </source>
</evidence>
<evidence type="ECO:0000305" key="11"/>
<evidence type="ECO:0000312" key="12">
    <source>
        <dbReference type="Araport" id="AT4G36920"/>
    </source>
</evidence>
<evidence type="ECO:0000312" key="13">
    <source>
        <dbReference type="EMBL" id="CAB16765.1"/>
    </source>
</evidence>
<keyword id="KW-0010">Activator</keyword>
<keyword id="KW-0217">Developmental protein</keyword>
<keyword id="KW-0221">Differentiation</keyword>
<keyword id="KW-0238">DNA-binding</keyword>
<keyword id="KW-0287">Flowering</keyword>
<keyword id="KW-0539">Nucleus</keyword>
<keyword id="KW-1185">Reference proteome</keyword>
<keyword id="KW-0677">Repeat</keyword>
<keyword id="KW-0804">Transcription</keyword>
<keyword id="KW-0805">Transcription regulation</keyword>
<dbReference type="EMBL" id="U12546">
    <property type="protein sequence ID" value="AAC13770.1"/>
    <property type="molecule type" value="mRNA"/>
</dbReference>
<dbReference type="EMBL" id="Z99707">
    <property type="protein sequence ID" value="CAB16765.1"/>
    <property type="molecule type" value="Genomic_DNA"/>
</dbReference>
<dbReference type="EMBL" id="AL161590">
    <property type="protein sequence ID" value="CAB80358.1"/>
    <property type="molecule type" value="Genomic_DNA"/>
</dbReference>
<dbReference type="EMBL" id="CP002687">
    <property type="protein sequence ID" value="AEE86717.1"/>
    <property type="molecule type" value="Genomic_DNA"/>
</dbReference>
<dbReference type="EMBL" id="CP002687">
    <property type="protein sequence ID" value="AEE86718.1"/>
    <property type="molecule type" value="Genomic_DNA"/>
</dbReference>
<dbReference type="EMBL" id="AY128328">
    <property type="protein sequence ID" value="AAM91531.1"/>
    <property type="status" value="ALT_INIT"/>
    <property type="molecule type" value="mRNA"/>
</dbReference>
<dbReference type="PIR" id="A85436">
    <property type="entry name" value="A85436"/>
</dbReference>
<dbReference type="RefSeq" id="NP_001190938.1">
    <property type="nucleotide sequence ID" value="NM_001204009.1"/>
</dbReference>
<dbReference type="RefSeq" id="NP_195410.1">
    <property type="nucleotide sequence ID" value="NM_119856.3"/>
</dbReference>
<dbReference type="SMR" id="P47927"/>
<dbReference type="BioGRID" id="15126">
    <property type="interactions" value="5"/>
</dbReference>
<dbReference type="FunCoup" id="P47927">
    <property type="interactions" value="910"/>
</dbReference>
<dbReference type="IntAct" id="P47927">
    <property type="interactions" value="13"/>
</dbReference>
<dbReference type="STRING" id="3702.P47927"/>
<dbReference type="PaxDb" id="3702-AT4G36920.2"/>
<dbReference type="ProteomicsDB" id="244484"/>
<dbReference type="EnsemblPlants" id="AT4G36920.1">
    <property type="protein sequence ID" value="AT4G36920.1"/>
    <property type="gene ID" value="AT4G36920"/>
</dbReference>
<dbReference type="EnsemblPlants" id="AT4G36920.2">
    <property type="protein sequence ID" value="AT4G36920.2"/>
    <property type="gene ID" value="AT4G36920"/>
</dbReference>
<dbReference type="GeneID" id="829845"/>
<dbReference type="Gramene" id="AT4G36920.1">
    <property type="protein sequence ID" value="AT4G36920.1"/>
    <property type="gene ID" value="AT4G36920"/>
</dbReference>
<dbReference type="Gramene" id="AT4G36920.2">
    <property type="protein sequence ID" value="AT4G36920.2"/>
    <property type="gene ID" value="AT4G36920"/>
</dbReference>
<dbReference type="KEGG" id="ath:AT4G36920"/>
<dbReference type="Araport" id="AT4G36920"/>
<dbReference type="TAIR" id="AT4G36920">
    <property type="gene designation" value="AP2"/>
</dbReference>
<dbReference type="eggNOG" id="ENOG502QQXB">
    <property type="taxonomic scope" value="Eukaryota"/>
</dbReference>
<dbReference type="HOGENOM" id="CLU_035462_4_1_1"/>
<dbReference type="InParanoid" id="P47927"/>
<dbReference type="OMA" id="HWFGVKF"/>
<dbReference type="OrthoDB" id="207175at2759"/>
<dbReference type="PhylomeDB" id="P47927"/>
<dbReference type="PRO" id="PR:P47927"/>
<dbReference type="Proteomes" id="UP000006548">
    <property type="component" value="Chromosome 4"/>
</dbReference>
<dbReference type="ExpressionAtlas" id="P47927">
    <property type="expression patterns" value="baseline and differential"/>
</dbReference>
<dbReference type="GO" id="GO:0005634">
    <property type="term" value="C:nucleus"/>
    <property type="evidence" value="ECO:0000250"/>
    <property type="project" value="TAIR"/>
</dbReference>
<dbReference type="GO" id="GO:0003700">
    <property type="term" value="F:DNA-binding transcription factor activity"/>
    <property type="evidence" value="ECO:0000250"/>
    <property type="project" value="TAIR"/>
</dbReference>
<dbReference type="GO" id="GO:0000976">
    <property type="term" value="F:transcription cis-regulatory region binding"/>
    <property type="evidence" value="ECO:0000353"/>
    <property type="project" value="TAIR"/>
</dbReference>
<dbReference type="GO" id="GO:0030154">
    <property type="term" value="P:cell differentiation"/>
    <property type="evidence" value="ECO:0007669"/>
    <property type="project" value="UniProtKB-KW"/>
</dbReference>
<dbReference type="GO" id="GO:0009908">
    <property type="term" value="P:flower development"/>
    <property type="evidence" value="ECO:0000304"/>
    <property type="project" value="TAIR"/>
</dbReference>
<dbReference type="GO" id="GO:0010073">
    <property type="term" value="P:meristem maintenance"/>
    <property type="evidence" value="ECO:0000315"/>
    <property type="project" value="TAIR"/>
</dbReference>
<dbReference type="GO" id="GO:0048481">
    <property type="term" value="P:plant ovule development"/>
    <property type="evidence" value="ECO:0000316"/>
    <property type="project" value="TAIR"/>
</dbReference>
<dbReference type="GO" id="GO:0048316">
    <property type="term" value="P:seed development"/>
    <property type="evidence" value="ECO:0000315"/>
    <property type="project" value="TAIR"/>
</dbReference>
<dbReference type="GO" id="GO:0010093">
    <property type="term" value="P:specification of floral organ identity"/>
    <property type="evidence" value="ECO:0000315"/>
    <property type="project" value="CACAO"/>
</dbReference>
<dbReference type="CDD" id="cd00018">
    <property type="entry name" value="AP2"/>
    <property type="match status" value="2"/>
</dbReference>
<dbReference type="FunFam" id="3.30.730.10:FF:000002">
    <property type="entry name" value="AP2-like ethylene-responsive transcription factor"/>
    <property type="match status" value="1"/>
</dbReference>
<dbReference type="FunFam" id="3.30.730.10:FF:000004">
    <property type="entry name" value="AP2-like ethylene-responsive transcription factor"/>
    <property type="match status" value="1"/>
</dbReference>
<dbReference type="Gene3D" id="3.30.730.10">
    <property type="entry name" value="AP2/ERF domain"/>
    <property type="match status" value="2"/>
</dbReference>
<dbReference type="InterPro" id="IPR001471">
    <property type="entry name" value="AP2/ERF_dom"/>
</dbReference>
<dbReference type="InterPro" id="IPR036955">
    <property type="entry name" value="AP2/ERF_dom_sf"/>
</dbReference>
<dbReference type="InterPro" id="IPR016177">
    <property type="entry name" value="DNA-bd_dom_sf"/>
</dbReference>
<dbReference type="PANTHER" id="PTHR32467">
    <property type="entry name" value="AP2-LIKE ETHYLENE-RESPONSIVE TRANSCRIPTION FACTOR"/>
    <property type="match status" value="1"/>
</dbReference>
<dbReference type="PANTHER" id="PTHR32467:SF142">
    <property type="entry name" value="FLORAL HOMEOTIC PROTEIN APETALA 2"/>
    <property type="match status" value="1"/>
</dbReference>
<dbReference type="Pfam" id="PF00847">
    <property type="entry name" value="AP2"/>
    <property type="match status" value="2"/>
</dbReference>
<dbReference type="PRINTS" id="PR00367">
    <property type="entry name" value="ETHRSPELEMNT"/>
</dbReference>
<dbReference type="SMART" id="SM00380">
    <property type="entry name" value="AP2"/>
    <property type="match status" value="2"/>
</dbReference>
<dbReference type="SUPFAM" id="SSF54171">
    <property type="entry name" value="DNA-binding domain"/>
    <property type="match status" value="2"/>
</dbReference>
<dbReference type="PROSITE" id="PS51032">
    <property type="entry name" value="AP2_ERF"/>
    <property type="match status" value="2"/>
</dbReference>
<feature type="chain" id="PRO_0000112522" description="Floral homeotic protein APETALA 2">
    <location>
        <begin position="1"/>
        <end position="432"/>
    </location>
</feature>
<feature type="DNA-binding region" description="AP2/ERF 1" evidence="2">
    <location>
        <begin position="131"/>
        <end position="187"/>
    </location>
</feature>
<feature type="DNA-binding region" description="AP2/ERF 2" evidence="2">
    <location>
        <begin position="223"/>
        <end position="280"/>
    </location>
</feature>
<feature type="region of interest" description="Disordered" evidence="3">
    <location>
        <begin position="1"/>
        <end position="56"/>
    </location>
</feature>
<feature type="region of interest" description="Disordered" evidence="3">
    <location>
        <begin position="287"/>
        <end position="362"/>
    </location>
</feature>
<feature type="region of interest" description="Disordered" evidence="3">
    <location>
        <begin position="395"/>
        <end position="432"/>
    </location>
</feature>
<feature type="short sequence motif" description="Nuclear localization signal" evidence="1">
    <location>
        <begin position="119"/>
        <end position="128"/>
    </location>
</feature>
<feature type="short sequence motif" description="EAR" evidence="11">
    <location>
        <begin position="304"/>
        <end position="308"/>
    </location>
</feature>
<feature type="compositionally biased region" description="Low complexity" evidence="3">
    <location>
        <begin position="26"/>
        <end position="41"/>
    </location>
</feature>
<feature type="compositionally biased region" description="Polar residues" evidence="3">
    <location>
        <begin position="290"/>
        <end position="301"/>
    </location>
</feature>
<feature type="compositionally biased region" description="Polar residues" evidence="3">
    <location>
        <begin position="325"/>
        <end position="335"/>
    </location>
</feature>
<feature type="compositionally biased region" description="Polar residues" evidence="3">
    <location>
        <begin position="345"/>
        <end position="358"/>
    </location>
</feature>
<feature type="compositionally biased region" description="Polar residues" evidence="3">
    <location>
        <begin position="406"/>
        <end position="424"/>
    </location>
</feature>
<feature type="mutagenesis site" description="In AP2-5; temperature-sensitive." evidence="9">
    <original>G</original>
    <variation>E</variation>
    <location>
        <position position="159"/>
    </location>
</feature>
<feature type="mutagenesis site" description="In AP2-1; temperature-sensitive." evidence="9">
    <original>G</original>
    <variation>S</variation>
    <location>
        <position position="251"/>
    </location>
</feature>
<feature type="mutagenesis site" description="Loss of interaction with TPL." evidence="8">
    <original>LDLSL</original>
    <variation>ADASA</variation>
    <location>
        <begin position="304"/>
        <end position="308"/>
    </location>
</feature>
<feature type="mutagenesis site" description="In AP2-5; temperature-sensitive." evidence="9">
    <original>Q</original>
    <variation>E</variation>
    <location>
        <position position="420"/>
    </location>
</feature>
<protein>
    <recommendedName>
        <fullName evidence="10">Floral homeotic protein APETALA 2</fullName>
    </recommendedName>
</protein>
<proteinExistence type="evidence at protein level"/>
<accession>P47927</accession>
<accession>Q8L7P9</accession>
<name>AP2_ARATH</name>
<reference key="1">
    <citation type="journal article" date="1994" name="Plant Cell">
        <title>Control of Arabidopsis flower and seed development by the homeotic gene APETALA2.</title>
        <authorList>
            <person name="Jofuku K.D."/>
            <person name="den Boer B.G.W."/>
            <person name="Van Montagu M."/>
            <person name="Okamuro J.K."/>
        </authorList>
    </citation>
    <scope>NUCLEOTIDE SEQUENCE [MRNA]</scope>
    <scope>MUTANTS AP2-1 AND AP2-5</scope>
    <scope>FUNCTION</scope>
    <source>
        <strain>cv. Columbia</strain>
        <tissue>Flower</tissue>
    </source>
</reference>
<reference key="2">
    <citation type="journal article" date="1998" name="Nature">
        <title>Analysis of 1.9 Mb of contiguous sequence from chromosome 4 of Arabidopsis thaliana.</title>
        <authorList>
            <person name="Bevan M."/>
            <person name="Bancroft I."/>
            <person name="Bent E."/>
            <person name="Love K."/>
            <person name="Goodman H.M."/>
            <person name="Dean C."/>
            <person name="Bergkamp R."/>
            <person name="Dirkse W."/>
            <person name="van Staveren M."/>
            <person name="Stiekema W."/>
            <person name="Drost L."/>
            <person name="Ridley P."/>
            <person name="Hudson S.-A."/>
            <person name="Patel K."/>
            <person name="Murphy G."/>
            <person name="Piffanelli P."/>
            <person name="Wedler H."/>
            <person name="Wedler E."/>
            <person name="Wambutt R."/>
            <person name="Weitzenegger T."/>
            <person name="Pohl T."/>
            <person name="Terryn N."/>
            <person name="Gielen J."/>
            <person name="Villarroel R."/>
            <person name="De Clercq R."/>
            <person name="van Montagu M."/>
            <person name="Lecharny A."/>
            <person name="Aubourg S."/>
            <person name="Gy I."/>
            <person name="Kreis M."/>
            <person name="Lao N."/>
            <person name="Kavanagh T."/>
            <person name="Hempel S."/>
            <person name="Kotter P."/>
            <person name="Entian K.-D."/>
            <person name="Rieger M."/>
            <person name="Schaefer M."/>
            <person name="Funk B."/>
            <person name="Mueller-Auer S."/>
            <person name="Silvey M."/>
            <person name="James R."/>
            <person name="Monfort A."/>
            <person name="Pons A."/>
            <person name="Puigdomenech P."/>
            <person name="Douka A."/>
            <person name="Voukelatou E."/>
            <person name="Milioni D."/>
            <person name="Hatzopoulos P."/>
            <person name="Piravandi E."/>
            <person name="Obermaier B."/>
            <person name="Hilbert H."/>
            <person name="Duesterhoeft A."/>
            <person name="Moores T."/>
            <person name="Jones J.D.G."/>
            <person name="Eneva T."/>
            <person name="Palme K."/>
            <person name="Benes V."/>
            <person name="Rechmann S."/>
            <person name="Ansorge W."/>
            <person name="Cooke R."/>
            <person name="Berger C."/>
            <person name="Delseny M."/>
            <person name="Voet M."/>
            <person name="Volckaert G."/>
            <person name="Mewes H.-W."/>
            <person name="Klosterman S."/>
            <person name="Schueller C."/>
            <person name="Chalwatzis N."/>
        </authorList>
    </citation>
    <scope>NUCLEOTIDE SEQUENCE [LARGE SCALE GENOMIC DNA]</scope>
    <source>
        <strain>cv. Columbia</strain>
    </source>
</reference>
<reference key="3">
    <citation type="journal article" date="1999" name="Nature">
        <title>Sequence and analysis of chromosome 4 of the plant Arabidopsis thaliana.</title>
        <authorList>
            <person name="Mayer K.F.X."/>
            <person name="Schueller C."/>
            <person name="Wambutt R."/>
            <person name="Murphy G."/>
            <person name="Volckaert G."/>
            <person name="Pohl T."/>
            <person name="Duesterhoeft A."/>
            <person name="Stiekema W."/>
            <person name="Entian K.-D."/>
            <person name="Terryn N."/>
            <person name="Harris B."/>
            <person name="Ansorge W."/>
            <person name="Brandt P."/>
            <person name="Grivell L.A."/>
            <person name="Rieger M."/>
            <person name="Weichselgartner M."/>
            <person name="de Simone V."/>
            <person name="Obermaier B."/>
            <person name="Mache R."/>
            <person name="Mueller M."/>
            <person name="Kreis M."/>
            <person name="Delseny M."/>
            <person name="Puigdomenech P."/>
            <person name="Watson M."/>
            <person name="Schmidtheini T."/>
            <person name="Reichert B."/>
            <person name="Portetelle D."/>
            <person name="Perez-Alonso M."/>
            <person name="Boutry M."/>
            <person name="Bancroft I."/>
            <person name="Vos P."/>
            <person name="Hoheisel J."/>
            <person name="Zimmermann W."/>
            <person name="Wedler H."/>
            <person name="Ridley P."/>
            <person name="Langham S.-A."/>
            <person name="McCullagh B."/>
            <person name="Bilham L."/>
            <person name="Robben J."/>
            <person name="van der Schueren J."/>
            <person name="Grymonprez B."/>
            <person name="Chuang Y.-J."/>
            <person name="Vandenbussche F."/>
            <person name="Braeken M."/>
            <person name="Weltjens I."/>
            <person name="Voet M."/>
            <person name="Bastiaens I."/>
            <person name="Aert R."/>
            <person name="Defoor E."/>
            <person name="Weitzenegger T."/>
            <person name="Bothe G."/>
            <person name="Ramsperger U."/>
            <person name="Hilbert H."/>
            <person name="Braun M."/>
            <person name="Holzer E."/>
            <person name="Brandt A."/>
            <person name="Peters S."/>
            <person name="van Staveren M."/>
            <person name="Dirkse W."/>
            <person name="Mooijman P."/>
            <person name="Klein Lankhorst R."/>
            <person name="Rose M."/>
            <person name="Hauf J."/>
            <person name="Koetter P."/>
            <person name="Berneiser S."/>
            <person name="Hempel S."/>
            <person name="Feldpausch M."/>
            <person name="Lamberth S."/>
            <person name="Van den Daele H."/>
            <person name="De Keyser A."/>
            <person name="Buysshaert C."/>
            <person name="Gielen J."/>
            <person name="Villarroel R."/>
            <person name="De Clercq R."/>
            <person name="van Montagu M."/>
            <person name="Rogers J."/>
            <person name="Cronin A."/>
            <person name="Quail M.A."/>
            <person name="Bray-Allen S."/>
            <person name="Clark L."/>
            <person name="Doggett J."/>
            <person name="Hall S."/>
            <person name="Kay M."/>
            <person name="Lennard N."/>
            <person name="McLay K."/>
            <person name="Mayes R."/>
            <person name="Pettett A."/>
            <person name="Rajandream M.A."/>
            <person name="Lyne M."/>
            <person name="Benes V."/>
            <person name="Rechmann S."/>
            <person name="Borkova D."/>
            <person name="Bloecker H."/>
            <person name="Scharfe M."/>
            <person name="Grimm M."/>
            <person name="Loehnert T.-H."/>
            <person name="Dose S."/>
            <person name="de Haan M."/>
            <person name="Maarse A.C."/>
            <person name="Schaefer M."/>
            <person name="Mueller-Auer S."/>
            <person name="Gabel C."/>
            <person name="Fuchs M."/>
            <person name="Fartmann B."/>
            <person name="Granderath K."/>
            <person name="Dauner D."/>
            <person name="Herzl A."/>
            <person name="Neumann S."/>
            <person name="Argiriou A."/>
            <person name="Vitale D."/>
            <person name="Liguori R."/>
            <person name="Piravandi E."/>
            <person name="Massenet O."/>
            <person name="Quigley F."/>
            <person name="Clabauld G."/>
            <person name="Muendlein A."/>
            <person name="Felber R."/>
            <person name="Schnabl S."/>
            <person name="Hiller R."/>
            <person name="Schmidt W."/>
            <person name="Lecharny A."/>
            <person name="Aubourg S."/>
            <person name="Chefdor F."/>
            <person name="Cooke R."/>
            <person name="Berger C."/>
            <person name="Monfort A."/>
            <person name="Casacuberta E."/>
            <person name="Gibbons T."/>
            <person name="Weber N."/>
            <person name="Vandenbol M."/>
            <person name="Bargues M."/>
            <person name="Terol J."/>
            <person name="Torres A."/>
            <person name="Perez-Perez A."/>
            <person name="Purnelle B."/>
            <person name="Bent E."/>
            <person name="Johnson S."/>
            <person name="Tacon D."/>
            <person name="Jesse T."/>
            <person name="Heijnen L."/>
            <person name="Schwarz S."/>
            <person name="Scholler P."/>
            <person name="Heber S."/>
            <person name="Francs P."/>
            <person name="Bielke C."/>
            <person name="Frishman D."/>
            <person name="Haase D."/>
            <person name="Lemcke K."/>
            <person name="Mewes H.-W."/>
            <person name="Stocker S."/>
            <person name="Zaccaria P."/>
            <person name="Bevan M."/>
            <person name="Wilson R.K."/>
            <person name="de la Bastide M."/>
            <person name="Habermann K."/>
            <person name="Parnell L."/>
            <person name="Dedhia N."/>
            <person name="Gnoj L."/>
            <person name="Schutz K."/>
            <person name="Huang E."/>
            <person name="Spiegel L."/>
            <person name="Sekhon M."/>
            <person name="Murray J."/>
            <person name="Sheet P."/>
            <person name="Cordes M."/>
            <person name="Abu-Threideh J."/>
            <person name="Stoneking T."/>
            <person name="Kalicki J."/>
            <person name="Graves T."/>
            <person name="Harmon G."/>
            <person name="Edwards J."/>
            <person name="Latreille P."/>
            <person name="Courtney L."/>
            <person name="Cloud J."/>
            <person name="Abbott A."/>
            <person name="Scott K."/>
            <person name="Johnson D."/>
            <person name="Minx P."/>
            <person name="Bentley D."/>
            <person name="Fulton B."/>
            <person name="Miller N."/>
            <person name="Greco T."/>
            <person name="Kemp K."/>
            <person name="Kramer J."/>
            <person name="Fulton L."/>
            <person name="Mardis E."/>
            <person name="Dante M."/>
            <person name="Pepin K."/>
            <person name="Hillier L.W."/>
            <person name="Nelson J."/>
            <person name="Spieth J."/>
            <person name="Ryan E."/>
            <person name="Andrews S."/>
            <person name="Geisel C."/>
            <person name="Layman D."/>
            <person name="Du H."/>
            <person name="Ali J."/>
            <person name="Berghoff A."/>
            <person name="Jones K."/>
            <person name="Drone K."/>
            <person name="Cotton M."/>
            <person name="Joshu C."/>
            <person name="Antonoiu B."/>
            <person name="Zidanic M."/>
            <person name="Strong C."/>
            <person name="Sun H."/>
            <person name="Lamar B."/>
            <person name="Yordan C."/>
            <person name="Ma P."/>
            <person name="Zhong J."/>
            <person name="Preston R."/>
            <person name="Vil D."/>
            <person name="Shekher M."/>
            <person name="Matero A."/>
            <person name="Shah R."/>
            <person name="Swaby I.K."/>
            <person name="O'Shaughnessy A."/>
            <person name="Rodriguez M."/>
            <person name="Hoffman J."/>
            <person name="Till S."/>
            <person name="Granat S."/>
            <person name="Shohdy N."/>
            <person name="Hasegawa A."/>
            <person name="Hameed A."/>
            <person name="Lodhi M."/>
            <person name="Johnson A."/>
            <person name="Chen E."/>
            <person name="Marra M.A."/>
            <person name="Martienssen R."/>
            <person name="McCombie W.R."/>
        </authorList>
    </citation>
    <scope>NUCLEOTIDE SEQUENCE [LARGE SCALE GENOMIC DNA]</scope>
    <source>
        <strain>cv. Columbia</strain>
    </source>
</reference>
<reference key="4">
    <citation type="journal article" date="2017" name="Plant J.">
        <title>Araport11: a complete reannotation of the Arabidopsis thaliana reference genome.</title>
        <authorList>
            <person name="Cheng C.Y."/>
            <person name="Krishnakumar V."/>
            <person name="Chan A.P."/>
            <person name="Thibaud-Nissen F."/>
            <person name="Schobel S."/>
            <person name="Town C.D."/>
        </authorList>
    </citation>
    <scope>GENOME REANNOTATION</scope>
    <source>
        <strain>cv. Columbia</strain>
    </source>
</reference>
<reference key="5">
    <citation type="journal article" date="2003" name="Science">
        <title>Empirical analysis of transcriptional activity in the Arabidopsis genome.</title>
        <authorList>
            <person name="Yamada K."/>
            <person name="Lim J."/>
            <person name="Dale J.M."/>
            <person name="Chen H."/>
            <person name="Shinn P."/>
            <person name="Palm C.J."/>
            <person name="Southwick A.M."/>
            <person name="Wu H.C."/>
            <person name="Kim C.J."/>
            <person name="Nguyen M."/>
            <person name="Pham P.K."/>
            <person name="Cheuk R.F."/>
            <person name="Karlin-Newmann G."/>
            <person name="Liu S.X."/>
            <person name="Lam B."/>
            <person name="Sakano H."/>
            <person name="Wu T."/>
            <person name="Yu G."/>
            <person name="Miranda M."/>
            <person name="Quach H.L."/>
            <person name="Tripp M."/>
            <person name="Chang C.H."/>
            <person name="Lee J.M."/>
            <person name="Toriumi M.J."/>
            <person name="Chan M.M."/>
            <person name="Tang C.C."/>
            <person name="Onodera C.S."/>
            <person name="Deng J.M."/>
            <person name="Akiyama K."/>
            <person name="Ansari Y."/>
            <person name="Arakawa T."/>
            <person name="Banh J."/>
            <person name="Banno F."/>
            <person name="Bowser L."/>
            <person name="Brooks S.Y."/>
            <person name="Carninci P."/>
            <person name="Chao Q."/>
            <person name="Choy N."/>
            <person name="Enju A."/>
            <person name="Goldsmith A.D."/>
            <person name="Gurjal M."/>
            <person name="Hansen N.F."/>
            <person name="Hayashizaki Y."/>
            <person name="Johnson-Hopson C."/>
            <person name="Hsuan V.W."/>
            <person name="Iida K."/>
            <person name="Karnes M."/>
            <person name="Khan S."/>
            <person name="Koesema E."/>
            <person name="Ishida J."/>
            <person name="Jiang P.X."/>
            <person name="Jones T."/>
            <person name="Kawai J."/>
            <person name="Kamiya A."/>
            <person name="Meyers C."/>
            <person name="Nakajima M."/>
            <person name="Narusaka M."/>
            <person name="Seki M."/>
            <person name="Sakurai T."/>
            <person name="Satou M."/>
            <person name="Tamse R."/>
            <person name="Vaysberg M."/>
            <person name="Wallender E.K."/>
            <person name="Wong C."/>
            <person name="Yamamura Y."/>
            <person name="Yuan S."/>
            <person name="Shinozaki K."/>
            <person name="Davis R.W."/>
            <person name="Theologis A."/>
            <person name="Ecker J.R."/>
        </authorList>
    </citation>
    <scope>NUCLEOTIDE SEQUENCE [LARGE SCALE MRNA] OF 221-432</scope>
    <source>
        <strain>cv. Columbia</strain>
    </source>
</reference>
<reference key="6">
    <citation type="journal article" date="1991" name="Cell">
        <title>Negative regulation of the Arabidopsis homeotic gene AGAMOUS by the APETALA2 product.</title>
        <authorList>
            <person name="Drews G.N."/>
            <person name="Bowman J.L."/>
            <person name="Meyerowitz E.M."/>
        </authorList>
    </citation>
    <scope>FUNCTION</scope>
</reference>
<reference key="7">
    <citation type="journal article" date="2003" name="Plant Cell">
        <title>Regulation of flowering time and floral organ identity by a microRNA and its APETALA2-like target genes.</title>
        <authorList>
            <person name="Aukerman M.J."/>
            <person name="Sakai H."/>
        </authorList>
    </citation>
    <scope>INDUCTION</scope>
</reference>
<reference key="8">
    <citation type="journal article" date="2003" name="Plant Physiol.">
        <title>A role for the GCC-box in jasmonate-mediated activation of the PDF1.2 gene of Arabidopsis.</title>
        <authorList>
            <person name="Brown R.L."/>
            <person name="Kazan K."/>
            <person name="McGrath K.C."/>
            <person name="Maclean D.J."/>
            <person name="Manners J.M."/>
        </authorList>
    </citation>
    <scope>INDUCTION</scope>
</reference>
<reference key="9">
    <citation type="journal article" date="2004" name="Science">
        <title>A microRNA as a translational repressor of APETALA2 in Arabidopsis flower development.</title>
        <authorList>
            <person name="Chen X."/>
        </authorList>
    </citation>
    <scope>INDUCTION</scope>
</reference>
<reference key="10">
    <citation type="journal article" date="2006" name="Plant Physiol.">
        <title>Genome-wide analysis of the ERF gene family in Arabidopsis and rice.</title>
        <authorList>
            <person name="Nakano T."/>
            <person name="Suzuki K."/>
            <person name="Fujimura T."/>
            <person name="Shinshi H."/>
        </authorList>
    </citation>
    <scope>GENE FAMILY</scope>
    <scope>NOMENCLATURE</scope>
</reference>
<reference key="11">
    <citation type="journal article" date="2012" name="Development">
        <title>APETALA2 negatively regulates multiple floral organ identity genes in Arabidopsis by recruiting the co-repressor TOPLESS and the histone deacetylase HDA19.</title>
        <authorList>
            <person name="Krogan N.T."/>
            <person name="Hogan K."/>
            <person name="Long J.A."/>
        </authorList>
    </citation>
    <scope>FUNCTION</scope>
    <scope>INTERACTION WITH TPL AND HDA19</scope>
    <scope>MUTAGENESIS OF 304-LEU--LEU-308</scope>
</reference>
<organism>
    <name type="scientific">Arabidopsis thaliana</name>
    <name type="common">Mouse-ear cress</name>
    <dbReference type="NCBI Taxonomy" id="3702"/>
    <lineage>
        <taxon>Eukaryota</taxon>
        <taxon>Viridiplantae</taxon>
        <taxon>Streptophyta</taxon>
        <taxon>Embryophyta</taxon>
        <taxon>Tracheophyta</taxon>
        <taxon>Spermatophyta</taxon>
        <taxon>Magnoliopsida</taxon>
        <taxon>eudicotyledons</taxon>
        <taxon>Gunneridae</taxon>
        <taxon>Pentapetalae</taxon>
        <taxon>rosids</taxon>
        <taxon>malvids</taxon>
        <taxon>Brassicales</taxon>
        <taxon>Brassicaceae</taxon>
        <taxon>Camelineae</taxon>
        <taxon>Arabidopsis</taxon>
    </lineage>
</organism>
<comment type="function">
    <text evidence="7 8 9">Probable transcriptional activator that promotes early floral meristem identity (PubMed:7919989). Is required subsequently for the transition of an inflorescence meristem into a floral meristem (PubMed:1675158). Plays a central role in the specification of floral identity, particularly for the normal development of sepals and petals in the wild-type flower, by spatially controlling the expression domains of multiple floral organ identity genes (PubMed:1675158, PubMed:23034631). Acts as A class cadastral protein by repressing the C class floral homeotic gene AGAMOUS in association with other repressors like LEUNIG and SEUSS (PubMed:1675158). Directly represses AGAMOUS by recruiting the transcriptional corepressor TOPLESS and the histone deacetylase HDA19 (PubMed:23034631). It is also required during seed development (PubMed:1675158).</text>
</comment>
<comment type="subunit">
    <text evidence="8">May form homodimer. Interacts with HDA19 and with TPL in an EAR-motif dependent manner (PubMed:23034631).</text>
</comment>
<comment type="subcellular location">
    <subcellularLocation>
        <location evidence="2">Nucleus</location>
    </subcellularLocation>
</comment>
<comment type="tissue specificity">
    <text>Sepals, petals, stamens, carpels, developing ovules, inflorescence stem, leaf and stem.</text>
</comment>
<comment type="developmental stage">
    <text>It is detectable at low levels throughout the shoot apex and at enhanced levels in the inflorescence meristem, young floral buds and throughout the early stages of flower development and organogenesis. During floral organ differentiation it becomes spatially restricted to specific organ, tissue and cell types within the flower.</text>
</comment>
<comment type="induction">
    <text evidence="4 5 6">Negatively regulated by the C class floral homeotic protein AGAMOUS in stamens and carpels. MicroRNA 172 (miRNA172) negatively regulates APETALA2 at the translational level and may modulate its expression pattern. Seems not to be influenced by jasmonate and Alternaria brassicicola.</text>
</comment>
<comment type="miscellaneous">
    <text>Mutations in the APETALA2 gene result in the ectopic expression of AGAMOUS, leading to the replacement of sepals by carpels and stamens and of petals by stamens.</text>
</comment>
<comment type="similarity">
    <text evidence="11">Belongs to the AP2/ERF transcription factor family. AP2 subfamily.</text>
</comment>
<comment type="sequence caution" evidence="11">
    <conflict type="erroneous initiation">
        <sequence resource="EMBL-CDS" id="AAM91531"/>
    </conflict>
    <text>Truncated N-terminus.</text>
</comment>